<comment type="function">
    <text evidence="4 5 6 11 12 13">Regulatory subunit of Kv4/D (Shal)-type voltage-gated rapidly inactivating A-type potassium channels (PubMed:10676964, PubMed:11423117, PubMed:17187064, PubMed:34552243, PubMed:34997220). Regulates channel density, inactivation kinetics and rate of recovery from inactivation in a calcium-dependent and isoform-specific manner (PubMed:10676964, PubMed:11423117, PubMed:17187064, PubMed:34552243, PubMed:34997220). In vitro, modulates KCND1/Kv4.1 and KCND2/Kv4.2 currents (PubMed:34552243). Increases the presence of KCND2 at the cell surface (PubMed:12829703).</text>
</comment>
<comment type="subunit">
    <text evidence="2 4 7 8 9 10 11 12 13">Component of heteromultimeric potassium channels. Identified in potassium channel complexes containing KCND1, KCND2, KCND3, KCNIP1, KCNIP2, KCNIP3, KCNIP4, DPP6 and DPP10 (By similarity). Part of a heterooctamer composed of the tetrameric channel and four KCNIP1 chains (PubMed:34552243, PubMed:34997220). Probably part of a complex consisting of KCNIP1, KCNIP2 isoform 3 and KCND2. Self-associates to form homodimers and homotetramers (PubMed:15358149, PubMed:17187064). Interacts with KCNIP2 isoform 3 in a calcium-dependent manner (PubMed:15358149). Interacts with Naja atra venom CTX3 (PubMed:15184042). Interacts with KCND2; this interaction mediates the capture of both the N- and C-terminus of KCND2, thus preventing KCND2 N-type inactivation and modulates the channel gating kinetics (PubMed:10676964, PubMed:14980207, PubMed:15358149, PubMed:34552243). Interacts with KCND3; each KCNIP1 monomer interacts with two adjacent KCND3 subunits, through both the N-terminal inactivation ball of a KCND3 subunit and a C-terminal helix from the adjacent KCND3 subunit, clamping them together; this interaction stabilizes the tetrameric form and modulates the channel gating kinetics namely channel activation and inactivation kinetics and rate of recovery from inactivation (PubMed:14980207, PubMed:17057713, PubMed:17187064, PubMed:34997220).</text>
</comment>
<comment type="interaction">
    <interactant intactId="EBI-2120635">
        <id>Q9NZI2</id>
    </interactant>
    <interactant intactId="EBI-1646745">
        <id>Q9NZV8</id>
        <label>KCND2</label>
    </interactant>
    <organismsDiffer>false</organismsDiffer>
    <experiments>4</experiments>
</comment>
<comment type="interaction">
    <interactant intactId="EBI-2120635">
        <id>Q9NZI2</id>
    </interactant>
    <interactant intactId="EBI-9825212">
        <id>Q9UK17</id>
        <label>KCND3</label>
    </interactant>
    <organismsDiffer>false</organismsDiffer>
    <experiments>3</experiments>
</comment>
<comment type="interaction">
    <interactant intactId="EBI-2120635">
        <id>Q9NZI2</id>
    </interactant>
    <interactant intactId="EBI-1053010">
        <id>Q9NS61-3</id>
        <label>KCNIP2</label>
    </interactant>
    <organismsDiffer>false</organismsDiffer>
    <experiments>4</experiments>
</comment>
<comment type="interaction">
    <interactant intactId="EBI-2120635">
        <id>Q9NZI2</id>
    </interactant>
    <interactant intactId="EBI-7082853">
        <id>Q62897</id>
        <label>Kcnd3</label>
    </interactant>
    <organismsDiffer>true</organismsDiffer>
    <experiments>3</experiments>
</comment>
<comment type="interaction">
    <interactant intactId="EBI-22452746">
        <id>Q9NZI2-2</id>
    </interactant>
    <interactant intactId="EBI-11955621">
        <id>Q01432-4</id>
        <label>AMPD3</label>
    </interactant>
    <organismsDiffer>false</organismsDiffer>
    <experiments>3</experiments>
</comment>
<comment type="interaction">
    <interactant intactId="EBI-22452746">
        <id>Q9NZI2-2</id>
    </interactant>
    <interactant intactId="EBI-12092171">
        <id>Q12797-6</id>
        <label>ASPH</label>
    </interactant>
    <organismsDiffer>false</organismsDiffer>
    <experiments>3</experiments>
</comment>
<comment type="interaction">
    <interactant intactId="EBI-22452746">
        <id>Q9NZI2-2</id>
    </interactant>
    <interactant intactId="EBI-752069">
        <id>Q9H5X1</id>
        <label>CIAO2A</label>
    </interactant>
    <organismsDiffer>false</organismsDiffer>
    <experiments>3</experiments>
</comment>
<comment type="interaction">
    <interactant intactId="EBI-22452746">
        <id>Q9NZI2-2</id>
    </interactant>
    <interactant intactId="EBI-1030834">
        <id>P40189</id>
        <label>IL6ST</label>
    </interactant>
    <organismsDiffer>false</organismsDiffer>
    <experiments>3</experiments>
</comment>
<comment type="interaction">
    <interactant intactId="EBI-22452746">
        <id>Q9NZI2-2</id>
    </interactant>
    <interactant intactId="EBI-725647">
        <id>Q99732</id>
        <label>LITAF</label>
    </interactant>
    <organismsDiffer>false</organismsDiffer>
    <experiments>3</experiments>
</comment>
<comment type="interaction">
    <interactant intactId="EBI-22452746">
        <id>Q9NZI2-2</id>
    </interactant>
    <interactant intactId="EBI-5378683">
        <id>Q02577</id>
        <label>NHLH2</label>
    </interactant>
    <organismsDiffer>false</organismsDiffer>
    <experiments>3</experiments>
</comment>
<comment type="interaction">
    <interactant intactId="EBI-22452746">
        <id>Q9NZI2-2</id>
    </interactant>
    <interactant intactId="EBI-740897">
        <id>Q9GZT8</id>
        <label>NIF3L1</label>
    </interactant>
    <organismsDiffer>false</organismsDiffer>
    <experiments>6</experiments>
</comment>
<comment type="interaction">
    <interactant intactId="EBI-22452746">
        <id>Q9NZI2-2</id>
    </interactant>
    <interactant intactId="EBI-10195782">
        <id>P08294</id>
        <label>SOD3</label>
    </interactant>
    <organismsDiffer>false</organismsDiffer>
    <experiments>3</experiments>
</comment>
<comment type="interaction">
    <interactant intactId="EBI-22452746">
        <id>Q9NZI2-2</id>
    </interactant>
    <interactant intactId="EBI-7082156">
        <id>Q7Z698</id>
        <label>SPRED2</label>
    </interactant>
    <organismsDiffer>false</organismsDiffer>
    <experiments>3</experiments>
</comment>
<comment type="interaction">
    <interactant intactId="EBI-22452746">
        <id>Q9NZI2-2</id>
    </interactant>
    <interactant intactId="EBI-11899977">
        <id>Q3MII6</id>
        <label>TBC1D25</label>
    </interactant>
    <organismsDiffer>false</organismsDiffer>
    <experiments>3</experiments>
</comment>
<comment type="subcellular location">
    <subcellularLocation>
        <location evidence="4">Cell membrane</location>
        <topology evidence="22">Peripheral membrane protein</topology>
    </subcellularLocation>
    <subcellularLocation>
        <location evidence="4">Cytoplasm</location>
    </subcellularLocation>
    <subcellularLocation>
        <location evidence="1">Cell projection</location>
        <location evidence="1">Dendrite</location>
    </subcellularLocation>
</comment>
<comment type="alternative products">
    <event type="alternative splicing"/>
    <isoform>
        <id>Q9NZI2-1</id>
        <name>1</name>
        <name evidence="18">KCHIP1b</name>
        <name evidence="18">KCNIP1-Ib</name>
        <sequence type="displayed"/>
    </isoform>
    <isoform>
        <id>Q9NZI2-2</id>
        <name>2</name>
        <name evidence="18">KCHIP1a</name>
        <name evidence="18">KCNIP1-IbdeltaII</name>
        <sequence type="described" ref="VSP_015044"/>
    </isoform>
    <isoform>
        <id>Q9NZI2-3</id>
        <name>3</name>
        <sequence type="described" ref="VSP_015043"/>
    </isoform>
    <isoform>
        <id>Q9NZI2-4</id>
        <name>4</name>
        <name evidence="18">KCNIP1-IadeltaII</name>
        <sequence type="described" ref="VSP_041511"/>
    </isoform>
    <isoform>
        <id>Q9NZI2-5</id>
        <name>5</name>
        <sequence type="described" ref="VSP_015044 VSP_047687"/>
    </isoform>
</comment>
<comment type="tissue specificity">
    <text>Isoform 1 and isoform 2 are expressed in brain and kidney. Isoform 1 is also expressed in liver, pancreas, skeletal muscle, small intestine and testis. Isoform 2 is also expressed in lung, pancreas, leukocytes, prostate and thymus.</text>
</comment>
<comment type="similarity">
    <text evidence="21">Belongs to the recoverin family.</text>
</comment>
<name>KCIP1_HUMAN</name>
<gene>
    <name evidence="23" type="primary">KCNIP1</name>
    <name evidence="15" type="synonym">KCHIP1</name>
    <name evidence="19" type="synonym">VABP</name>
</gene>
<reference key="1">
    <citation type="journal article" date="2000" name="Nature">
        <title>Modulation of A-type potassium channels by a family of calcium sensors.</title>
        <authorList>
            <person name="An W.F."/>
            <person name="Bowlby M.R."/>
            <person name="Betty M."/>
            <person name="Cao J."/>
            <person name="Ling H.-P."/>
            <person name="Mendoza G."/>
            <person name="Hinson J.W."/>
            <person name="Mattsson K.I."/>
            <person name="Strassle B.W."/>
            <person name="Trimmer J.S."/>
            <person name="Rhodes K.J."/>
        </authorList>
    </citation>
    <scope>NUCLEOTIDE SEQUENCE [MRNA] (ISOFORM 2)</scope>
    <scope>FUNCTION</scope>
    <scope>INTERACTION WITH KCND2</scope>
    <scope>SUBCELLULAR LOCATION</scope>
</reference>
<reference key="2">
    <citation type="submission" date="2002-10" db="EMBL/GenBank/DDBJ databases">
        <title>Molecular cloning of human VABP gene.</title>
        <authorList>
            <person name="Xia K."/>
            <person name="Fang H.Y."/>
            <person name="Zhong X.Y."/>
            <person name="Xia J.H."/>
            <person name="Zhang Z.H."/>
        </authorList>
    </citation>
    <scope>NUCLEOTIDE SEQUENCE [MRNA] (ISOFORM 2)</scope>
    <source>
        <tissue>Brain</tissue>
    </source>
</reference>
<reference key="3">
    <citation type="journal article" date="2005" name="Genomics">
        <title>Structure, alternative splicing, and expression of the human and mouse KCNIP gene family.</title>
        <authorList>
            <person name="Pruunsild P."/>
            <person name="Timmusk T."/>
        </authorList>
    </citation>
    <scope>NUCLEOTIDE SEQUENCE [MRNA] (ISOFORMS 1; 2; 4 AND 5)</scope>
    <scope>ALTERNATIVE SPLICING</scope>
</reference>
<reference key="4">
    <citation type="submission" date="2004-10" db="EMBL/GenBank/DDBJ databases">
        <title>Study on mutations in KCNIP1 gene.</title>
        <authorList>
            <person name="Zheng L."/>
            <person name="Jun X.X."/>
            <person name="Yue F.F."/>
            <person name="Min L.Y."/>
            <person name="Ming S.Y."/>
            <person name="Jun Y.F."/>
        </authorList>
    </citation>
    <scope>NUCLEOTIDE SEQUENCE [MRNA] (ISOFORM 3)</scope>
</reference>
<reference key="5">
    <citation type="journal article" date="2004" name="Nat. Genet.">
        <title>Complete sequencing and characterization of 21,243 full-length human cDNAs.</title>
        <authorList>
            <person name="Ota T."/>
            <person name="Suzuki Y."/>
            <person name="Nishikawa T."/>
            <person name="Otsuki T."/>
            <person name="Sugiyama T."/>
            <person name="Irie R."/>
            <person name="Wakamatsu A."/>
            <person name="Hayashi K."/>
            <person name="Sato H."/>
            <person name="Nagai K."/>
            <person name="Kimura K."/>
            <person name="Makita H."/>
            <person name="Sekine M."/>
            <person name="Obayashi M."/>
            <person name="Nishi T."/>
            <person name="Shibahara T."/>
            <person name="Tanaka T."/>
            <person name="Ishii S."/>
            <person name="Yamamoto J."/>
            <person name="Saito K."/>
            <person name="Kawai Y."/>
            <person name="Isono Y."/>
            <person name="Nakamura Y."/>
            <person name="Nagahari K."/>
            <person name="Murakami K."/>
            <person name="Yasuda T."/>
            <person name="Iwayanagi T."/>
            <person name="Wagatsuma M."/>
            <person name="Shiratori A."/>
            <person name="Sudo H."/>
            <person name="Hosoiri T."/>
            <person name="Kaku Y."/>
            <person name="Kodaira H."/>
            <person name="Kondo H."/>
            <person name="Sugawara M."/>
            <person name="Takahashi M."/>
            <person name="Kanda K."/>
            <person name="Yokoi T."/>
            <person name="Furuya T."/>
            <person name="Kikkawa E."/>
            <person name="Omura Y."/>
            <person name="Abe K."/>
            <person name="Kamihara K."/>
            <person name="Katsuta N."/>
            <person name="Sato K."/>
            <person name="Tanikawa M."/>
            <person name="Yamazaki M."/>
            <person name="Ninomiya K."/>
            <person name="Ishibashi T."/>
            <person name="Yamashita H."/>
            <person name="Murakawa K."/>
            <person name="Fujimori K."/>
            <person name="Tanai H."/>
            <person name="Kimata M."/>
            <person name="Watanabe M."/>
            <person name="Hiraoka S."/>
            <person name="Chiba Y."/>
            <person name="Ishida S."/>
            <person name="Ono Y."/>
            <person name="Takiguchi S."/>
            <person name="Watanabe S."/>
            <person name="Yosida M."/>
            <person name="Hotuta T."/>
            <person name="Kusano J."/>
            <person name="Kanehori K."/>
            <person name="Takahashi-Fujii A."/>
            <person name="Hara H."/>
            <person name="Tanase T.-O."/>
            <person name="Nomura Y."/>
            <person name="Togiya S."/>
            <person name="Komai F."/>
            <person name="Hara R."/>
            <person name="Takeuchi K."/>
            <person name="Arita M."/>
            <person name="Imose N."/>
            <person name="Musashino K."/>
            <person name="Yuuki H."/>
            <person name="Oshima A."/>
            <person name="Sasaki N."/>
            <person name="Aotsuka S."/>
            <person name="Yoshikawa Y."/>
            <person name="Matsunawa H."/>
            <person name="Ichihara T."/>
            <person name="Shiohata N."/>
            <person name="Sano S."/>
            <person name="Moriya S."/>
            <person name="Momiyama H."/>
            <person name="Satoh N."/>
            <person name="Takami S."/>
            <person name="Terashima Y."/>
            <person name="Suzuki O."/>
            <person name="Nakagawa S."/>
            <person name="Senoh A."/>
            <person name="Mizoguchi H."/>
            <person name="Goto Y."/>
            <person name="Shimizu F."/>
            <person name="Wakebe H."/>
            <person name="Hishigaki H."/>
            <person name="Watanabe T."/>
            <person name="Sugiyama A."/>
            <person name="Takemoto M."/>
            <person name="Kawakami B."/>
            <person name="Yamazaki M."/>
            <person name="Watanabe K."/>
            <person name="Kumagai A."/>
            <person name="Itakura S."/>
            <person name="Fukuzumi Y."/>
            <person name="Fujimori Y."/>
            <person name="Komiyama M."/>
            <person name="Tashiro H."/>
            <person name="Tanigami A."/>
            <person name="Fujiwara T."/>
            <person name="Ono T."/>
            <person name="Yamada K."/>
            <person name="Fujii Y."/>
            <person name="Ozaki K."/>
            <person name="Hirao M."/>
            <person name="Ohmori Y."/>
            <person name="Kawabata A."/>
            <person name="Hikiji T."/>
            <person name="Kobatake N."/>
            <person name="Inagaki H."/>
            <person name="Ikema Y."/>
            <person name="Okamoto S."/>
            <person name="Okitani R."/>
            <person name="Kawakami T."/>
            <person name="Noguchi S."/>
            <person name="Itoh T."/>
            <person name="Shigeta K."/>
            <person name="Senba T."/>
            <person name="Matsumura K."/>
            <person name="Nakajima Y."/>
            <person name="Mizuno T."/>
            <person name="Morinaga M."/>
            <person name="Sasaki M."/>
            <person name="Togashi T."/>
            <person name="Oyama M."/>
            <person name="Hata H."/>
            <person name="Watanabe M."/>
            <person name="Komatsu T."/>
            <person name="Mizushima-Sugano J."/>
            <person name="Satoh T."/>
            <person name="Shirai Y."/>
            <person name="Takahashi Y."/>
            <person name="Nakagawa K."/>
            <person name="Okumura K."/>
            <person name="Nagase T."/>
            <person name="Nomura N."/>
            <person name="Kikuchi H."/>
            <person name="Masuho Y."/>
            <person name="Yamashita R."/>
            <person name="Nakai K."/>
            <person name="Yada T."/>
            <person name="Nakamura Y."/>
            <person name="Ohara O."/>
            <person name="Isogai T."/>
            <person name="Sugano S."/>
        </authorList>
    </citation>
    <scope>NUCLEOTIDE SEQUENCE [LARGE SCALE MRNA] (ISOFORM 4)</scope>
    <source>
        <tissue>Testis</tissue>
    </source>
</reference>
<reference key="6">
    <citation type="journal article" date="2004" name="Nature">
        <title>The DNA sequence and comparative analysis of human chromosome 5.</title>
        <authorList>
            <person name="Schmutz J."/>
            <person name="Martin J."/>
            <person name="Terry A."/>
            <person name="Couronne O."/>
            <person name="Grimwood J."/>
            <person name="Lowry S."/>
            <person name="Gordon L.A."/>
            <person name="Scott D."/>
            <person name="Xie G."/>
            <person name="Huang W."/>
            <person name="Hellsten U."/>
            <person name="Tran-Gyamfi M."/>
            <person name="She X."/>
            <person name="Prabhakar S."/>
            <person name="Aerts A."/>
            <person name="Altherr M."/>
            <person name="Bajorek E."/>
            <person name="Black S."/>
            <person name="Branscomb E."/>
            <person name="Caoile C."/>
            <person name="Challacombe J.F."/>
            <person name="Chan Y.M."/>
            <person name="Denys M."/>
            <person name="Detter J.C."/>
            <person name="Escobar J."/>
            <person name="Flowers D."/>
            <person name="Fotopulos D."/>
            <person name="Glavina T."/>
            <person name="Gomez M."/>
            <person name="Gonzales E."/>
            <person name="Goodstein D."/>
            <person name="Grigoriev I."/>
            <person name="Groza M."/>
            <person name="Hammon N."/>
            <person name="Hawkins T."/>
            <person name="Haydu L."/>
            <person name="Israni S."/>
            <person name="Jett J."/>
            <person name="Kadner K."/>
            <person name="Kimball H."/>
            <person name="Kobayashi A."/>
            <person name="Lopez F."/>
            <person name="Lou Y."/>
            <person name="Martinez D."/>
            <person name="Medina C."/>
            <person name="Morgan J."/>
            <person name="Nandkeshwar R."/>
            <person name="Noonan J.P."/>
            <person name="Pitluck S."/>
            <person name="Pollard M."/>
            <person name="Predki P."/>
            <person name="Priest J."/>
            <person name="Ramirez L."/>
            <person name="Retterer J."/>
            <person name="Rodriguez A."/>
            <person name="Rogers S."/>
            <person name="Salamov A."/>
            <person name="Salazar A."/>
            <person name="Thayer N."/>
            <person name="Tice H."/>
            <person name="Tsai M."/>
            <person name="Ustaszewska A."/>
            <person name="Vo N."/>
            <person name="Wheeler J."/>
            <person name="Wu K."/>
            <person name="Yang J."/>
            <person name="Dickson M."/>
            <person name="Cheng J.-F."/>
            <person name="Eichler E.E."/>
            <person name="Olsen A."/>
            <person name="Pennacchio L.A."/>
            <person name="Rokhsar D.S."/>
            <person name="Richardson P."/>
            <person name="Lucas S.M."/>
            <person name="Myers R.M."/>
            <person name="Rubin E.M."/>
        </authorList>
    </citation>
    <scope>NUCLEOTIDE SEQUENCE [LARGE SCALE GENOMIC DNA]</scope>
</reference>
<reference key="7">
    <citation type="submission" date="2005-09" db="EMBL/GenBank/DDBJ databases">
        <authorList>
            <person name="Mural R.J."/>
            <person name="Istrail S."/>
            <person name="Sutton G."/>
            <person name="Florea L."/>
            <person name="Halpern A.L."/>
            <person name="Mobarry C.M."/>
            <person name="Lippert R."/>
            <person name="Walenz B."/>
            <person name="Shatkay H."/>
            <person name="Dew I."/>
            <person name="Miller J.R."/>
            <person name="Flanigan M.J."/>
            <person name="Edwards N.J."/>
            <person name="Bolanos R."/>
            <person name="Fasulo D."/>
            <person name="Halldorsson B.V."/>
            <person name="Hannenhalli S."/>
            <person name="Turner R."/>
            <person name="Yooseph S."/>
            <person name="Lu F."/>
            <person name="Nusskern D.R."/>
            <person name="Shue B.C."/>
            <person name="Zheng X.H."/>
            <person name="Zhong F."/>
            <person name="Delcher A.L."/>
            <person name="Huson D.H."/>
            <person name="Kravitz S.A."/>
            <person name="Mouchard L."/>
            <person name="Reinert K."/>
            <person name="Remington K.A."/>
            <person name="Clark A.G."/>
            <person name="Waterman M.S."/>
            <person name="Eichler E.E."/>
            <person name="Adams M.D."/>
            <person name="Hunkapiller M.W."/>
            <person name="Myers E.W."/>
            <person name="Venter J.C."/>
        </authorList>
    </citation>
    <scope>NUCLEOTIDE SEQUENCE [LARGE SCALE GENOMIC DNA]</scope>
</reference>
<reference key="8">
    <citation type="journal article" date="2004" name="Genome Res.">
        <title>The status, quality, and expansion of the NIH full-length cDNA project: the Mammalian Gene Collection (MGC).</title>
        <authorList>
            <consortium name="The MGC Project Team"/>
        </authorList>
    </citation>
    <scope>NUCLEOTIDE SEQUENCE [LARGE SCALE MRNA] (ISOFORM 2)</scope>
    <source>
        <tissue>Brain</tissue>
    </source>
</reference>
<reference key="9">
    <citation type="journal article" date="2003" name="Mol. Cell. Neurosci.">
        <title>Differential modulation of Kv4 kinetics by KCHIP1 splice variants.</title>
        <authorList>
            <person name="Van Hoorick D."/>
            <person name="Raes A."/>
            <person name="Keysers W."/>
            <person name="Mayeur E."/>
            <person name="Snyders D.J."/>
        </authorList>
    </citation>
    <scope>PARTIAL NUCLEOTIDE SEQUENCE [GENOMIC DNA]</scope>
    <scope>ALTERNATIVE SPLICING (ISOFORM 1)</scope>
    <scope>TISSUE SPECIFICITY (ISOFORMS 1 AND 2)</scope>
</reference>
<reference key="10">
    <citation type="journal article" date="2001" name="FEBS Lett.">
        <title>Different effects of the Ca(2+)-binding protein, KChIP1, on two Kv4 subfamily members, Kv4.1 and Kv4.2.</title>
        <authorList>
            <person name="Nakamura T.Y."/>
            <person name="Nandi S."/>
            <person name="Pountney D.J."/>
            <person name="Artman M."/>
            <person name="Rudy B."/>
            <person name="Coetzee W.A."/>
        </authorList>
    </citation>
    <scope>FUNCTION</scope>
</reference>
<reference key="11">
    <citation type="journal article" date="2003" name="J. Biol. Chem.">
        <title>A fundamental role for KChIPs in determining the molecular properties and trafficking of Kv4.2 potassium channels.</title>
        <authorList>
            <person name="Shibata R."/>
            <person name="Misonou H."/>
            <person name="Campomanes C.R."/>
            <person name="Anderson A.E."/>
            <person name="Schrader L.A."/>
            <person name="Doliveira L.C."/>
            <person name="Carroll K.I."/>
            <person name="Sweatt J.D."/>
            <person name="Rhodes K.J."/>
            <person name="Trimmer J.S."/>
        </authorList>
    </citation>
    <scope>FUNCTION</scope>
</reference>
<reference key="12">
    <citation type="journal article" date="2004" name="Biochem. Biophys. Res. Commun.">
        <title>Evidence showing an intermolecular interaction between KChIP proteins and Taiwan cobra cardiotoxins.</title>
        <authorList>
            <person name="Lin Y.-L."/>
            <person name="Lin S.-R."/>
            <person name="Wu T.T."/>
            <person name="Chang L.-S."/>
        </authorList>
    </citation>
    <scope>INTERACTION WITH SNAKE CTX3</scope>
</reference>
<reference key="13">
    <citation type="journal article" date="2004" name="Biochem. Biophys. Res. Commun.">
        <title>Protein-protein interactions of KChIP proteins and Kv4.2.</title>
        <authorList>
            <person name="Lin Y.-L."/>
            <person name="Chen C.Y."/>
            <person name="Cheng C.P."/>
            <person name="Chang L.S."/>
        </authorList>
    </citation>
    <scope>INTERACTION WITH KCNIP2 AND KCDN2</scope>
    <scope>HOMOOLIGOMERIZATION</scope>
</reference>
<reference key="14">
    <citation type="journal article" date="2004" name="Neuron">
        <title>Two N-terminal domains of Kv4 K(+) channels regulate binding to and modulation by KChIP1.</title>
        <authorList>
            <person name="Scannevin R.H."/>
            <person name="Wang K."/>
            <person name="Jow F."/>
            <person name="Megules J."/>
            <person name="Kopsco D.C."/>
            <person name="Edris W."/>
            <person name="Carroll K.C."/>
            <person name="Lu Q."/>
            <person name="Xu W."/>
            <person name="Xu Z."/>
            <person name="Katz A.H."/>
            <person name="Olland S."/>
            <person name="Lin L."/>
            <person name="Taylor M."/>
            <person name="Stahl M."/>
            <person name="Malakian K."/>
            <person name="Somers W."/>
            <person name="Mosyak L."/>
            <person name="Bowlby M.R."/>
            <person name="Chanda P."/>
            <person name="Rhodes K.J."/>
        </authorList>
    </citation>
    <scope>X-RAY CRYSTALLOGRAPHY (2.3 ANGSTROMS) (ISOFORM 2)</scope>
    <scope>INTERACTION WITH KCDN2 AND KCDN3</scope>
</reference>
<reference key="15">
    <citation type="journal article" date="2006" name="Nat. Struct. Mol. Biol.">
        <title>Three-dimensional structure of the KChIP1-Kv4.3 T1 complex reveals a cross-shaped octamer.</title>
        <authorList>
            <person name="Pioletti M."/>
            <person name="Findeisen F."/>
            <person name="Hura G.L."/>
            <person name="Minor D.L. Jr."/>
        </authorList>
    </citation>
    <scope>X-RAY CRYSTALLOGRAPHY (3.35 ANGSTROMS) OF 48-227 IN COMPLEX WITH CALCIUM IONS AND KCND3</scope>
    <scope>SUBUNIT</scope>
    <scope>CALCIUM-BINDING</scope>
</reference>
<reference key="16">
    <citation type="journal article" date="2007" name="Nat. Neurosci.">
        <title>Structural basis for modulation of Kv4 K+ channels by auxiliary KChIP subunits.</title>
        <authorList>
            <person name="Wang H."/>
            <person name="Yan Y."/>
            <person name="Liu Q."/>
            <person name="Huang Y."/>
            <person name="Shen Y."/>
            <person name="Chen L."/>
            <person name="Chen Y."/>
            <person name="Yang Q."/>
            <person name="Hao Q."/>
            <person name="Wang K."/>
            <person name="Chai J."/>
        </authorList>
    </citation>
    <scope>X-RAY CRYSTALLOGRAPHY (3.2 ANGSTROMS) OF 49-227 IN COMPLEX WITH CALCIUM IONS AND KCND3</scope>
    <scope>FUNCTION</scope>
    <scope>SUBUNIT</scope>
</reference>
<reference evidence="24 25 26" key="17">
    <citation type="journal article" date="2021" name="Nature">
        <title>Structural basis of gating modulation of Kv4 channel complexes.</title>
        <authorList>
            <person name="Kise Y."/>
            <person name="Kasuya G."/>
            <person name="Okamoto H.H."/>
            <person name="Yamanouchi D."/>
            <person name="Kobayashi K."/>
            <person name="Kusakizako T."/>
            <person name="Nishizawa T."/>
            <person name="Nakajo K."/>
            <person name="Nureki O."/>
        </authorList>
    </citation>
    <scope>STRUCTURE BY ELECTRON MICROSCOPY (2.90 ANGSTROMS) IN COMPLEX WITH KCND2</scope>
    <scope>SUBUNIT</scope>
    <scope>FUNCTION</scope>
</reference>
<reference evidence="27 28" key="18">
    <citation type="journal article" date="2022" name="Cell Res.">
        <title>Structural basis for the gating modulation of Kv4.3 by auxiliary subunits.</title>
        <authorList>
            <person name="Ma D."/>
            <person name="Zhao C."/>
            <person name="Wang X."/>
            <person name="Li X."/>
            <person name="Zha Y."/>
            <person name="Zhang Y."/>
            <person name="Fu G."/>
            <person name="Liang P."/>
            <person name="Guo J."/>
            <person name="Lai D."/>
        </authorList>
    </citation>
    <scope>STRUCTURE BY ELECTRON MICROSCOPY (2.80 ANGSTROMS) IN COMPLEX WITH KCND3</scope>
    <scope>FUNCTION</scope>
    <scope>SUBUNIT</scope>
</reference>
<sequence length="227" mass="26817">MGAVMGTFSSLQTKQRRPSKDIAWWYYQYQRDKIEDELEMTMVCHRPEGLEQLEAQTNFTKRELQVLYRGFKNECPSGVVNEDTFKQIYAQFFPHGDASTYAHYLFNAFDTTQTGSVKFEDFVTALSILLRGTVHEKLRWTFNLYDINKDGYINKEEMMDIVKAIYDMMGKYTYPVLKEDTPRQHVDVFFQKMDKNKDGIVTLDEFLESCQEDDNIMRSLQLFQNVM</sequence>
<accession>Q9NZI2</accession>
<accession>A0A0C4DFQ7</accession>
<accession>B7Z7B4</accession>
<accession>Q3YAD0</accession>
<accession>Q3YAD1</accession>
<accession>Q3YAD2</accession>
<accession>Q3YAD3</accession>
<accession>Q5U822</accession>
<proteinExistence type="evidence at protein level"/>
<organism>
    <name type="scientific">Homo sapiens</name>
    <name type="common">Human</name>
    <dbReference type="NCBI Taxonomy" id="9606"/>
    <lineage>
        <taxon>Eukaryota</taxon>
        <taxon>Metazoa</taxon>
        <taxon>Chordata</taxon>
        <taxon>Craniata</taxon>
        <taxon>Vertebrata</taxon>
        <taxon>Euteleostomi</taxon>
        <taxon>Mammalia</taxon>
        <taxon>Eutheria</taxon>
        <taxon>Euarchontoglires</taxon>
        <taxon>Primates</taxon>
        <taxon>Haplorrhini</taxon>
        <taxon>Catarrhini</taxon>
        <taxon>Hominidae</taxon>
        <taxon>Homo</taxon>
    </lineage>
</organism>
<feature type="chain" id="PRO_0000073818" description="A-type potassium channel modulatory protein KCNIP1">
    <location>
        <begin position="1"/>
        <end position="227"/>
    </location>
</feature>
<feature type="domain" description="EF-hand 1; degenerate" evidence="21">
    <location>
        <begin position="38"/>
        <end position="94"/>
    </location>
</feature>
<feature type="domain" description="EF-hand 2" evidence="3">
    <location>
        <begin position="97"/>
        <end position="132"/>
    </location>
</feature>
<feature type="domain" description="EF-hand 3" evidence="3">
    <location>
        <begin position="133"/>
        <end position="168"/>
    </location>
</feature>
<feature type="domain" description="EF-hand 4" evidence="3">
    <location>
        <begin position="181"/>
        <end position="216"/>
    </location>
</feature>
<feature type="region of interest" description="Interaction with KCND2" evidence="1">
    <location>
        <begin position="214"/>
        <end position="227"/>
    </location>
</feature>
<feature type="binding site" evidence="3 10 11">
    <location>
        <position position="146"/>
    </location>
    <ligand>
        <name>Ca(2+)</name>
        <dbReference type="ChEBI" id="CHEBI:29108"/>
        <label>1</label>
    </ligand>
</feature>
<feature type="binding site" evidence="3 10 11">
    <location>
        <position position="148"/>
    </location>
    <ligand>
        <name>Ca(2+)</name>
        <dbReference type="ChEBI" id="CHEBI:29108"/>
        <label>1</label>
    </ligand>
</feature>
<feature type="binding site" evidence="3 10 11">
    <location>
        <position position="150"/>
    </location>
    <ligand>
        <name>Ca(2+)</name>
        <dbReference type="ChEBI" id="CHEBI:29108"/>
        <label>1</label>
    </ligand>
</feature>
<feature type="binding site" evidence="3 10 11">
    <location>
        <position position="152"/>
    </location>
    <ligand>
        <name>Ca(2+)</name>
        <dbReference type="ChEBI" id="CHEBI:29108"/>
        <label>1</label>
    </ligand>
</feature>
<feature type="binding site" evidence="3 10 11">
    <location>
        <position position="157"/>
    </location>
    <ligand>
        <name>Ca(2+)</name>
        <dbReference type="ChEBI" id="CHEBI:29108"/>
        <label>1</label>
    </ligand>
</feature>
<feature type="binding site" evidence="3 10 11">
    <location>
        <position position="194"/>
    </location>
    <ligand>
        <name>Ca(2+)</name>
        <dbReference type="ChEBI" id="CHEBI:29108"/>
        <label>2</label>
    </ligand>
</feature>
<feature type="binding site" evidence="3 10 11">
    <location>
        <position position="196"/>
    </location>
    <ligand>
        <name>Ca(2+)</name>
        <dbReference type="ChEBI" id="CHEBI:29108"/>
        <label>2</label>
    </ligand>
</feature>
<feature type="binding site" evidence="3 10 11">
    <location>
        <position position="198"/>
    </location>
    <ligand>
        <name>Ca(2+)</name>
        <dbReference type="ChEBI" id="CHEBI:29108"/>
        <label>2</label>
    </ligand>
</feature>
<feature type="binding site" evidence="3 10 11">
    <location>
        <position position="205"/>
    </location>
    <ligand>
        <name>Ca(2+)</name>
        <dbReference type="ChEBI" id="CHEBI:29108"/>
        <label>2</label>
    </ligand>
</feature>
<feature type="splice variant" id="VSP_015043" description="In isoform 3." evidence="20">
    <location>
        <begin position="1"/>
        <end position="39"/>
    </location>
</feature>
<feature type="splice variant" id="VSP_041511" description="In isoform 4." evidence="16 18">
    <original>MGAVMGTFSSLQTKQRRPSKDIAWWYYQYQR</original>
    <variation>MSGCSKRCKLGFVKFAQTIFKLITGTLSK</variation>
    <location>
        <begin position="1"/>
        <end position="31"/>
    </location>
</feature>
<feature type="splice variant" id="VSP_015044" description="In isoform 2 and isoform 5." evidence="14 17 18 19">
    <location>
        <begin position="21"/>
        <end position="31"/>
    </location>
</feature>
<feature type="splice variant" id="VSP_047687" description="In isoform 5." evidence="18">
    <original>G</original>
    <variation>GALPCLEGSPCVEFLPPSPALLFCLV</variation>
    <location>
        <position position="96"/>
    </location>
</feature>
<feature type="sequence conflict" description="In Ref. 5; BAH13550." evidence="21" ref="5">
    <original>S</original>
    <variation>P</variation>
    <location>
        <position position="116"/>
    </location>
</feature>
<feature type="helix" evidence="29">
    <location>
        <begin position="50"/>
        <end position="56"/>
    </location>
</feature>
<feature type="strand" evidence="30">
    <location>
        <begin position="57"/>
        <end position="59"/>
    </location>
</feature>
<feature type="helix" evidence="29">
    <location>
        <begin position="61"/>
        <end position="74"/>
    </location>
</feature>
<feature type="strand" evidence="31">
    <location>
        <begin position="78"/>
        <end position="81"/>
    </location>
</feature>
<feature type="helix" evidence="29">
    <location>
        <begin position="82"/>
        <end position="90"/>
    </location>
</feature>
<feature type="strand" evidence="30">
    <location>
        <begin position="93"/>
        <end position="96"/>
    </location>
</feature>
<feature type="helix" evidence="29">
    <location>
        <begin position="99"/>
        <end position="109"/>
    </location>
</feature>
<feature type="helix" evidence="31">
    <location>
        <begin position="111"/>
        <end position="113"/>
    </location>
</feature>
<feature type="strand" evidence="31">
    <location>
        <begin position="115"/>
        <end position="118"/>
    </location>
</feature>
<feature type="helix" evidence="29">
    <location>
        <begin position="119"/>
        <end position="131"/>
    </location>
</feature>
<feature type="helix" evidence="29">
    <location>
        <begin position="134"/>
        <end position="145"/>
    </location>
</feature>
<feature type="strand" evidence="31">
    <location>
        <begin position="148"/>
        <end position="150"/>
    </location>
</feature>
<feature type="strand" evidence="29">
    <location>
        <begin position="151"/>
        <end position="153"/>
    </location>
</feature>
<feature type="helix" evidence="29">
    <location>
        <begin position="155"/>
        <end position="169"/>
    </location>
</feature>
<feature type="helix" evidence="29">
    <location>
        <begin position="175"/>
        <end position="177"/>
    </location>
</feature>
<feature type="strand" evidence="29">
    <location>
        <begin position="179"/>
        <end position="181"/>
    </location>
</feature>
<feature type="helix" evidence="29">
    <location>
        <begin position="182"/>
        <end position="193"/>
    </location>
</feature>
<feature type="strand" evidence="30">
    <location>
        <begin position="198"/>
        <end position="201"/>
    </location>
</feature>
<feature type="helix" evidence="29">
    <location>
        <begin position="203"/>
        <end position="211"/>
    </location>
</feature>
<feature type="helix" evidence="29">
    <location>
        <begin position="214"/>
        <end position="225"/>
    </location>
</feature>
<protein>
    <recommendedName>
        <fullName evidence="21">A-type potassium channel modulatory protein KCNIP1</fullName>
    </recommendedName>
    <alternativeName>
        <fullName>Kv channel-interacting protein 1</fullName>
        <shortName evidence="15">KChIP1</shortName>
    </alternativeName>
    <alternativeName>
        <fullName>Potassium channel-interacting protein 1</fullName>
    </alternativeName>
    <alternativeName>
        <fullName evidence="19">Vesicle APC-binding protein</fullName>
    </alternativeName>
</protein>
<evidence type="ECO:0000250" key="1">
    <source>
        <dbReference type="UniProtKB" id="Q8R426"/>
    </source>
</evidence>
<evidence type="ECO:0000250" key="2">
    <source>
        <dbReference type="UniProtKB" id="Q9JJ57"/>
    </source>
</evidence>
<evidence type="ECO:0000255" key="3">
    <source>
        <dbReference type="PROSITE-ProRule" id="PRU00448"/>
    </source>
</evidence>
<evidence type="ECO:0000269" key="4">
    <source>
    </source>
</evidence>
<evidence type="ECO:0000269" key="5">
    <source>
    </source>
</evidence>
<evidence type="ECO:0000269" key="6">
    <source>
    </source>
</evidence>
<evidence type="ECO:0000269" key="7">
    <source>
    </source>
</evidence>
<evidence type="ECO:0000269" key="8">
    <source>
    </source>
</evidence>
<evidence type="ECO:0000269" key="9">
    <source>
    </source>
</evidence>
<evidence type="ECO:0000269" key="10">
    <source>
    </source>
</evidence>
<evidence type="ECO:0000269" key="11">
    <source>
    </source>
</evidence>
<evidence type="ECO:0000269" key="12">
    <source>
    </source>
</evidence>
<evidence type="ECO:0000269" key="13">
    <source>
    </source>
</evidence>
<evidence type="ECO:0000303" key="14">
    <source>
    </source>
</evidence>
<evidence type="ECO:0000303" key="15">
    <source>
    </source>
</evidence>
<evidence type="ECO:0000303" key="16">
    <source>
    </source>
</evidence>
<evidence type="ECO:0000303" key="17">
    <source>
    </source>
</evidence>
<evidence type="ECO:0000303" key="18">
    <source>
    </source>
</evidence>
<evidence type="ECO:0000303" key="19">
    <source ref="2"/>
</evidence>
<evidence type="ECO:0000303" key="20">
    <source ref="4"/>
</evidence>
<evidence type="ECO:0000305" key="21"/>
<evidence type="ECO:0000305" key="22">
    <source>
    </source>
</evidence>
<evidence type="ECO:0000312" key="23">
    <source>
        <dbReference type="HGNC" id="HGNC:15521"/>
    </source>
</evidence>
<evidence type="ECO:0007744" key="24">
    <source>
        <dbReference type="PDB" id="7E83"/>
    </source>
</evidence>
<evidence type="ECO:0007744" key="25">
    <source>
        <dbReference type="PDB" id="7E84"/>
    </source>
</evidence>
<evidence type="ECO:0007744" key="26">
    <source>
        <dbReference type="PDB" id="7F3F"/>
    </source>
</evidence>
<evidence type="ECO:0007744" key="27">
    <source>
        <dbReference type="PDB" id="7W6N"/>
    </source>
</evidence>
<evidence type="ECO:0007744" key="28">
    <source>
        <dbReference type="PDB" id="7W6T"/>
    </source>
</evidence>
<evidence type="ECO:0007829" key="29">
    <source>
        <dbReference type="PDB" id="1S1E"/>
    </source>
</evidence>
<evidence type="ECO:0007829" key="30">
    <source>
        <dbReference type="PDB" id="2NZ0"/>
    </source>
</evidence>
<evidence type="ECO:0007829" key="31">
    <source>
        <dbReference type="PDB" id="7E83"/>
    </source>
</evidence>
<keyword id="KW-0002">3D-structure</keyword>
<keyword id="KW-0025">Alternative splicing</keyword>
<keyword id="KW-0106">Calcium</keyword>
<keyword id="KW-1003">Cell membrane</keyword>
<keyword id="KW-0966">Cell projection</keyword>
<keyword id="KW-0963">Cytoplasm</keyword>
<keyword id="KW-0407">Ion channel</keyword>
<keyword id="KW-0406">Ion transport</keyword>
<keyword id="KW-0472">Membrane</keyword>
<keyword id="KW-0479">Metal-binding</keyword>
<keyword id="KW-0630">Potassium</keyword>
<keyword id="KW-0631">Potassium channel</keyword>
<keyword id="KW-0633">Potassium transport</keyword>
<keyword id="KW-1267">Proteomics identification</keyword>
<keyword id="KW-1185">Reference proteome</keyword>
<keyword id="KW-0677">Repeat</keyword>
<keyword id="KW-0813">Transport</keyword>
<keyword id="KW-0851">Voltage-gated channel</keyword>
<dbReference type="EMBL" id="AF199597">
    <property type="protein sequence ID" value="AAF33682.1"/>
    <property type="molecule type" value="mRNA"/>
</dbReference>
<dbReference type="EMBL" id="AY170821">
    <property type="protein sequence ID" value="AAN77491.1"/>
    <property type="molecule type" value="mRNA"/>
</dbReference>
<dbReference type="EMBL" id="DQ148476">
    <property type="protein sequence ID" value="AAZ77793.1"/>
    <property type="molecule type" value="mRNA"/>
</dbReference>
<dbReference type="EMBL" id="DQ148477">
    <property type="protein sequence ID" value="AAZ77794.1"/>
    <property type="molecule type" value="mRNA"/>
</dbReference>
<dbReference type="EMBL" id="DQ148478">
    <property type="protein sequence ID" value="AAZ77795.1"/>
    <property type="molecule type" value="mRNA"/>
</dbReference>
<dbReference type="EMBL" id="DQ148479">
    <property type="protein sequence ID" value="AAZ77796.1"/>
    <property type="molecule type" value="mRNA"/>
</dbReference>
<dbReference type="EMBL" id="AY780424">
    <property type="protein sequence ID" value="AAV51968.1"/>
    <property type="molecule type" value="mRNA"/>
</dbReference>
<dbReference type="EMBL" id="AK301775">
    <property type="protein sequence ID" value="BAH13550.1"/>
    <property type="molecule type" value="mRNA"/>
</dbReference>
<dbReference type="EMBL" id="AC008619">
    <property type="status" value="NOT_ANNOTATED_CDS"/>
    <property type="molecule type" value="Genomic_DNA"/>
</dbReference>
<dbReference type="EMBL" id="AC008719">
    <property type="status" value="NOT_ANNOTATED_CDS"/>
    <property type="molecule type" value="Genomic_DNA"/>
</dbReference>
<dbReference type="EMBL" id="AC027306">
    <property type="status" value="NOT_ANNOTATED_CDS"/>
    <property type="molecule type" value="Genomic_DNA"/>
</dbReference>
<dbReference type="EMBL" id="AC027312">
    <property type="status" value="NOT_ANNOTATED_CDS"/>
    <property type="molecule type" value="Genomic_DNA"/>
</dbReference>
<dbReference type="EMBL" id="AC034199">
    <property type="status" value="NOT_ANNOTATED_CDS"/>
    <property type="molecule type" value="Genomic_DNA"/>
</dbReference>
<dbReference type="EMBL" id="AC113432">
    <property type="status" value="NOT_ANNOTATED_CDS"/>
    <property type="molecule type" value="Genomic_DNA"/>
</dbReference>
<dbReference type="EMBL" id="AC134820">
    <property type="status" value="NOT_ANNOTATED_CDS"/>
    <property type="molecule type" value="Genomic_DNA"/>
</dbReference>
<dbReference type="EMBL" id="KF458055">
    <property type="status" value="NOT_ANNOTATED_CDS"/>
    <property type="molecule type" value="Genomic_DNA"/>
</dbReference>
<dbReference type="EMBL" id="CH471062">
    <property type="protein sequence ID" value="EAW61470.1"/>
    <property type="molecule type" value="Genomic_DNA"/>
</dbReference>
<dbReference type="EMBL" id="BC050375">
    <property type="protein sequence ID" value="AAH50375.1"/>
    <property type="molecule type" value="mRNA"/>
</dbReference>
<dbReference type="CCDS" id="CCDS34285.1">
    <molecule id="Q9NZI2-4"/>
</dbReference>
<dbReference type="CCDS" id="CCDS34286.1">
    <molecule id="Q9NZI2-1"/>
</dbReference>
<dbReference type="CCDS" id="CCDS4374.1">
    <molecule id="Q9NZI2-2"/>
</dbReference>
<dbReference type="CCDS" id="CCDS64312.1">
    <molecule id="Q9NZI2-5"/>
</dbReference>
<dbReference type="CCDS" id="CCDS64313.1">
    <molecule id="Q9NZI2-3"/>
</dbReference>
<dbReference type="RefSeq" id="NP_001030009.1">
    <molecule id="Q9NZI2-1"/>
    <property type="nucleotide sequence ID" value="NM_001034837.3"/>
</dbReference>
<dbReference type="RefSeq" id="NP_001030010.1">
    <molecule id="Q9NZI2-4"/>
    <property type="nucleotide sequence ID" value="NM_001034838.3"/>
</dbReference>
<dbReference type="RefSeq" id="NP_001265268.1">
    <molecule id="Q9NZI2-5"/>
    <property type="nucleotide sequence ID" value="NM_001278339.2"/>
</dbReference>
<dbReference type="RefSeq" id="NP_001265269.1">
    <molecule id="Q9NZI2-3"/>
    <property type="nucleotide sequence ID" value="NM_001278340.2"/>
</dbReference>
<dbReference type="RefSeq" id="NP_055407.1">
    <molecule id="Q9NZI2-2"/>
    <property type="nucleotide sequence ID" value="NM_014592.4"/>
</dbReference>
<dbReference type="RefSeq" id="XP_016864896.1">
    <molecule id="Q9NZI2-4"/>
    <property type="nucleotide sequence ID" value="XM_017009407.2"/>
</dbReference>
<dbReference type="RefSeq" id="XP_054208452.1">
    <molecule id="Q9NZI2-4"/>
    <property type="nucleotide sequence ID" value="XM_054352477.1"/>
</dbReference>
<dbReference type="PDB" id="1S1E">
    <property type="method" value="X-ray"/>
    <property type="resolution" value="2.30 A"/>
    <property type="chains" value="A=1-227"/>
</dbReference>
<dbReference type="PDB" id="2I2R">
    <property type="method" value="X-ray"/>
    <property type="resolution" value="3.35 A"/>
    <property type="chains" value="E/F/G/H/M/N/O/P=48-227"/>
</dbReference>
<dbReference type="PDB" id="2NZ0">
    <property type="method" value="X-ray"/>
    <property type="resolution" value="3.20 A"/>
    <property type="chains" value="A/C=49-227"/>
</dbReference>
<dbReference type="PDB" id="7E83">
    <property type="method" value="EM"/>
    <property type="resolution" value="3.10 A"/>
    <property type="chains" value="B/E/F/H=47-227"/>
</dbReference>
<dbReference type="PDB" id="7E84">
    <property type="method" value="EM"/>
    <property type="resolution" value="3.10 A"/>
    <property type="chains" value="E/H/J/L=47-227"/>
</dbReference>
<dbReference type="PDB" id="7F3F">
    <property type="method" value="EM"/>
    <property type="resolution" value="3.10 A"/>
    <property type="chains" value="E/H/J/L=1-227"/>
</dbReference>
<dbReference type="PDB" id="7W6N">
    <property type="method" value="EM"/>
    <property type="resolution" value="3.40 A"/>
    <property type="chains" value="A/C/E/G=1-227"/>
</dbReference>
<dbReference type="PDB" id="7W6T">
    <property type="method" value="EM"/>
    <property type="resolution" value="3.85 A"/>
    <property type="chains" value="A/C/E/G=1-227"/>
</dbReference>
<dbReference type="PDBsum" id="1S1E"/>
<dbReference type="PDBsum" id="2I2R"/>
<dbReference type="PDBsum" id="2NZ0"/>
<dbReference type="PDBsum" id="7E83"/>
<dbReference type="PDBsum" id="7E84"/>
<dbReference type="PDBsum" id="7F3F"/>
<dbReference type="PDBsum" id="7W6N"/>
<dbReference type="PDBsum" id="7W6T"/>
<dbReference type="EMDB" id="EMD-31009"/>
<dbReference type="EMDB" id="EMD-31010"/>
<dbReference type="EMDB" id="EMD-31016"/>
<dbReference type="EMDB" id="EMD-31019"/>
<dbReference type="EMDB" id="EMD-31433"/>
<dbReference type="EMDB" id="EMD-32330"/>
<dbReference type="EMDB" id="EMD-32335"/>
<dbReference type="SMR" id="Q9NZI2"/>
<dbReference type="BioGRID" id="119044">
    <property type="interactions" value="25"/>
</dbReference>
<dbReference type="ComplexPortal" id="CPX-3256">
    <property type="entry name" value="Kv4.3-KChIP1 channel complex"/>
</dbReference>
<dbReference type="DIP" id="DIP-29246N"/>
<dbReference type="FunCoup" id="Q9NZI2">
    <property type="interactions" value="267"/>
</dbReference>
<dbReference type="IntAct" id="Q9NZI2">
    <property type="interactions" value="25"/>
</dbReference>
<dbReference type="MINT" id="Q9NZI2"/>
<dbReference type="STRING" id="9606.ENSP00000414886"/>
<dbReference type="TCDB" id="8.A.82.2.6">
    <property type="family name" value="the calmodulin calcium binding protein (calmodulin) family"/>
</dbReference>
<dbReference type="BioMuta" id="KCNIP1"/>
<dbReference type="DMDM" id="73621122"/>
<dbReference type="MassIVE" id="Q9NZI2"/>
<dbReference type="PeptideAtlas" id="Q9NZI2"/>
<dbReference type="ProteomicsDB" id="61890"/>
<dbReference type="ProteomicsDB" id="83400">
    <molecule id="Q9NZI2-1"/>
</dbReference>
<dbReference type="ProteomicsDB" id="83401">
    <molecule id="Q9NZI2-2"/>
</dbReference>
<dbReference type="ProteomicsDB" id="83402">
    <molecule id="Q9NZI2-3"/>
</dbReference>
<dbReference type="ProteomicsDB" id="83403">
    <molecule id="Q9NZI2-4"/>
</dbReference>
<dbReference type="ABCD" id="Q9NZI2">
    <property type="antibodies" value="1 sequenced antibody"/>
</dbReference>
<dbReference type="Antibodypedia" id="16893">
    <property type="antibodies" value="316 antibodies from 30 providers"/>
</dbReference>
<dbReference type="DNASU" id="30820"/>
<dbReference type="Ensembl" id="ENST00000328939.9">
    <molecule id="Q9NZI2-2"/>
    <property type="protein sequence ID" value="ENSP00000329686.4"/>
    <property type="gene ID" value="ENSG00000182132.15"/>
</dbReference>
<dbReference type="Ensembl" id="ENST00000377360.8">
    <molecule id="Q9NZI2-4"/>
    <property type="protein sequence ID" value="ENSP00000366577.4"/>
    <property type="gene ID" value="ENSG00000182132.15"/>
</dbReference>
<dbReference type="Ensembl" id="ENST00000411494.5">
    <molecule id="Q9NZI2-1"/>
    <property type="protein sequence ID" value="ENSP00000395323.1"/>
    <property type="gene ID" value="ENSG00000182132.15"/>
</dbReference>
<dbReference type="Ensembl" id="ENST00000434108.5">
    <molecule id="Q9NZI2-5"/>
    <property type="protein sequence ID" value="ENSP00000414886.1"/>
    <property type="gene ID" value="ENSG00000182132.15"/>
</dbReference>
<dbReference type="Ensembl" id="ENST00000520740.5">
    <molecule id="Q9NZI2-3"/>
    <property type="protein sequence ID" value="ENSP00000431102.1"/>
    <property type="gene ID" value="ENSG00000182132.15"/>
</dbReference>
<dbReference type="GeneID" id="30820"/>
<dbReference type="KEGG" id="hsa:30820"/>
<dbReference type="MANE-Select" id="ENST00000328939.9">
    <molecule id="Q9NZI2-2"/>
    <property type="protein sequence ID" value="ENSP00000329686.4"/>
    <property type="RefSeq nucleotide sequence ID" value="NM_014592.4"/>
    <property type="RefSeq protein sequence ID" value="NP_055407.1"/>
</dbReference>
<dbReference type="UCSC" id="uc003map.5">
    <molecule id="Q9NZI2-1"/>
    <property type="organism name" value="human"/>
</dbReference>
<dbReference type="AGR" id="HGNC:15521"/>
<dbReference type="CTD" id="30820"/>
<dbReference type="DisGeNET" id="30820"/>
<dbReference type="GeneCards" id="KCNIP1"/>
<dbReference type="HGNC" id="HGNC:15521">
    <property type="gene designation" value="KCNIP1"/>
</dbReference>
<dbReference type="HPA" id="ENSG00000182132">
    <property type="expression patterns" value="Group enriched (brain, epididymis)"/>
</dbReference>
<dbReference type="MalaCards" id="KCNIP1"/>
<dbReference type="MIM" id="604660">
    <property type="type" value="gene"/>
</dbReference>
<dbReference type="neXtProt" id="NX_Q9NZI2"/>
<dbReference type="OpenTargets" id="ENSG00000182132"/>
<dbReference type="PharmGKB" id="PA30041"/>
<dbReference type="VEuPathDB" id="HostDB:ENSG00000182132"/>
<dbReference type="GeneTree" id="ENSGT00940000158048"/>
<dbReference type="HOGENOM" id="CLU_072366_2_2_1"/>
<dbReference type="InParanoid" id="Q9NZI2"/>
<dbReference type="OMA" id="YRGFKNX"/>
<dbReference type="OrthoDB" id="191686at2759"/>
<dbReference type="PAN-GO" id="Q9NZI2">
    <property type="GO annotations" value="5 GO annotations based on evolutionary models"/>
</dbReference>
<dbReference type="PhylomeDB" id="Q9NZI2"/>
<dbReference type="TreeFam" id="TF318560"/>
<dbReference type="PathwayCommons" id="Q9NZI2"/>
<dbReference type="Reactome" id="R-HSA-5576894">
    <property type="pathway name" value="Phase 1 - inactivation of fast Na+ channels"/>
</dbReference>
<dbReference type="SignaLink" id="Q9NZI2"/>
<dbReference type="BioGRID-ORCS" id="30820">
    <property type="hits" value="10 hits in 1150 CRISPR screens"/>
</dbReference>
<dbReference type="ChiTaRS" id="KCNIP1">
    <property type="organism name" value="human"/>
</dbReference>
<dbReference type="EvolutionaryTrace" id="Q9NZI2"/>
<dbReference type="GeneWiki" id="KCNIP1"/>
<dbReference type="GenomeRNAi" id="30820"/>
<dbReference type="Pharos" id="Q9NZI2">
    <property type="development level" value="Tbio"/>
</dbReference>
<dbReference type="PRO" id="PR:Q9NZI2"/>
<dbReference type="Proteomes" id="UP000005640">
    <property type="component" value="Chromosome 5"/>
</dbReference>
<dbReference type="RNAct" id="Q9NZI2">
    <property type="molecule type" value="protein"/>
</dbReference>
<dbReference type="Bgee" id="ENSG00000182132">
    <property type="expression patterns" value="Expressed in nucleus accumbens and 102 other cell types or tissues"/>
</dbReference>
<dbReference type="ExpressionAtlas" id="Q9NZI2">
    <property type="expression patterns" value="baseline and differential"/>
</dbReference>
<dbReference type="GO" id="GO:0005737">
    <property type="term" value="C:cytoplasm"/>
    <property type="evidence" value="ECO:0000314"/>
    <property type="project" value="UniProtKB"/>
</dbReference>
<dbReference type="GO" id="GO:0009898">
    <property type="term" value="C:cytoplasmic side of plasma membrane"/>
    <property type="evidence" value="ECO:0000314"/>
    <property type="project" value="UniProtKB"/>
</dbReference>
<dbReference type="GO" id="GO:0030425">
    <property type="term" value="C:dendrite"/>
    <property type="evidence" value="ECO:0007669"/>
    <property type="project" value="UniProtKB-SubCell"/>
</dbReference>
<dbReference type="GO" id="GO:0071196">
    <property type="term" value="C:Kv4.3-KChIP1 channel complex"/>
    <property type="evidence" value="ECO:0000353"/>
    <property type="project" value="ComplexPortal"/>
</dbReference>
<dbReference type="GO" id="GO:0005886">
    <property type="term" value="C:plasma membrane"/>
    <property type="evidence" value="ECO:0000304"/>
    <property type="project" value="Reactome"/>
</dbReference>
<dbReference type="GO" id="GO:0045202">
    <property type="term" value="C:synapse"/>
    <property type="evidence" value="ECO:0007669"/>
    <property type="project" value="GOC"/>
</dbReference>
<dbReference type="GO" id="GO:0008076">
    <property type="term" value="C:voltage-gated potassium channel complex"/>
    <property type="evidence" value="ECO:0000314"/>
    <property type="project" value="UniProtKB"/>
</dbReference>
<dbReference type="GO" id="GO:0005509">
    <property type="term" value="F:calcium ion binding"/>
    <property type="evidence" value="ECO:0000314"/>
    <property type="project" value="UniProtKB"/>
</dbReference>
<dbReference type="GO" id="GO:0005267">
    <property type="term" value="F:potassium channel activity"/>
    <property type="evidence" value="ECO:0007669"/>
    <property type="project" value="UniProtKB-KW"/>
</dbReference>
<dbReference type="GO" id="GO:0015459">
    <property type="term" value="F:potassium channel regulator activity"/>
    <property type="evidence" value="ECO:0000314"/>
    <property type="project" value="UniProtKB"/>
</dbReference>
<dbReference type="GO" id="GO:0044325">
    <property type="term" value="F:transmembrane transporter binding"/>
    <property type="evidence" value="ECO:0000318"/>
    <property type="project" value="GO_Central"/>
</dbReference>
<dbReference type="GO" id="GO:0007268">
    <property type="term" value="P:chemical synaptic transmission"/>
    <property type="evidence" value="ECO:0000303"/>
    <property type="project" value="ComplexPortal"/>
</dbReference>
<dbReference type="GO" id="GO:0086009">
    <property type="term" value="P:membrane repolarization"/>
    <property type="evidence" value="ECO:0000303"/>
    <property type="project" value="ComplexPortal"/>
</dbReference>
<dbReference type="GO" id="GO:0006936">
    <property type="term" value="P:muscle contraction"/>
    <property type="evidence" value="ECO:0000303"/>
    <property type="project" value="ComplexPortal"/>
</dbReference>
<dbReference type="GO" id="GO:0097623">
    <property type="term" value="P:potassium ion export across plasma membrane"/>
    <property type="evidence" value="ECO:0000303"/>
    <property type="project" value="ComplexPortal"/>
</dbReference>
<dbReference type="GO" id="GO:0008016">
    <property type="term" value="P:regulation of heart contraction"/>
    <property type="evidence" value="ECO:0000303"/>
    <property type="project" value="ComplexPortal"/>
</dbReference>
<dbReference type="GO" id="GO:1901379">
    <property type="term" value="P:regulation of potassium ion transmembrane transport"/>
    <property type="evidence" value="ECO:0000314"/>
    <property type="project" value="UniProtKB"/>
</dbReference>
<dbReference type="GO" id="GO:0009966">
    <property type="term" value="P:regulation of signal transduction"/>
    <property type="evidence" value="ECO:0000318"/>
    <property type="project" value="GO_Central"/>
</dbReference>
<dbReference type="CDD" id="cd00051">
    <property type="entry name" value="EFh"/>
    <property type="match status" value="2"/>
</dbReference>
<dbReference type="FunFam" id="1.10.238.10:FF:000043">
    <property type="entry name" value="Kv channel-interacting protein 1 isoform 2"/>
    <property type="match status" value="1"/>
</dbReference>
<dbReference type="Gene3D" id="1.10.238.10">
    <property type="entry name" value="EF-hand"/>
    <property type="match status" value="1"/>
</dbReference>
<dbReference type="InterPro" id="IPR011992">
    <property type="entry name" value="EF-hand-dom_pair"/>
</dbReference>
<dbReference type="InterPro" id="IPR018247">
    <property type="entry name" value="EF_Hand_1_Ca_BS"/>
</dbReference>
<dbReference type="InterPro" id="IPR002048">
    <property type="entry name" value="EF_hand_dom"/>
</dbReference>
<dbReference type="InterPro" id="IPR028846">
    <property type="entry name" value="Recoverin"/>
</dbReference>
<dbReference type="PANTHER" id="PTHR23055">
    <property type="entry name" value="CALCIUM BINDING PROTEINS"/>
    <property type="match status" value="1"/>
</dbReference>
<dbReference type="PANTHER" id="PTHR23055:SF82">
    <property type="entry name" value="KV CHANNEL-INTERACTING PROTEIN 1"/>
    <property type="match status" value="1"/>
</dbReference>
<dbReference type="Pfam" id="PF13499">
    <property type="entry name" value="EF-hand_7"/>
    <property type="match status" value="1"/>
</dbReference>
<dbReference type="Pfam" id="PF13833">
    <property type="entry name" value="EF-hand_8"/>
    <property type="match status" value="1"/>
</dbReference>
<dbReference type="PRINTS" id="PR00450">
    <property type="entry name" value="RECOVERIN"/>
</dbReference>
<dbReference type="SMART" id="SM00054">
    <property type="entry name" value="EFh"/>
    <property type="match status" value="3"/>
</dbReference>
<dbReference type="SUPFAM" id="SSF47473">
    <property type="entry name" value="EF-hand"/>
    <property type="match status" value="1"/>
</dbReference>
<dbReference type="PROSITE" id="PS00018">
    <property type="entry name" value="EF_HAND_1"/>
    <property type="match status" value="2"/>
</dbReference>
<dbReference type="PROSITE" id="PS50222">
    <property type="entry name" value="EF_HAND_2"/>
    <property type="match status" value="3"/>
</dbReference>